<protein>
    <recommendedName>
        <fullName evidence="1">tRNA uridine 5-carboxymethylaminomethyl modification enzyme MnmG</fullName>
    </recommendedName>
    <alternativeName>
        <fullName evidence="1">Glucose-inhibited division protein A</fullName>
    </alternativeName>
</protein>
<dbReference type="EMBL" id="AP009240">
    <property type="protein sequence ID" value="BAG79555.1"/>
    <property type="molecule type" value="Genomic_DNA"/>
</dbReference>
<dbReference type="RefSeq" id="WP_000499788.1">
    <property type="nucleotide sequence ID" value="NC_011415.1"/>
</dbReference>
<dbReference type="SMR" id="B6I3X8"/>
<dbReference type="GeneID" id="75205459"/>
<dbReference type="KEGG" id="ecy:ECSE_4031"/>
<dbReference type="HOGENOM" id="CLU_007831_2_2_6"/>
<dbReference type="Proteomes" id="UP000008199">
    <property type="component" value="Chromosome"/>
</dbReference>
<dbReference type="GO" id="GO:0005829">
    <property type="term" value="C:cytosol"/>
    <property type="evidence" value="ECO:0007669"/>
    <property type="project" value="TreeGrafter"/>
</dbReference>
<dbReference type="GO" id="GO:0050660">
    <property type="term" value="F:flavin adenine dinucleotide binding"/>
    <property type="evidence" value="ECO:0007669"/>
    <property type="project" value="UniProtKB-UniRule"/>
</dbReference>
<dbReference type="GO" id="GO:0030488">
    <property type="term" value="P:tRNA methylation"/>
    <property type="evidence" value="ECO:0007669"/>
    <property type="project" value="TreeGrafter"/>
</dbReference>
<dbReference type="GO" id="GO:0002098">
    <property type="term" value="P:tRNA wobble uridine modification"/>
    <property type="evidence" value="ECO:0007669"/>
    <property type="project" value="InterPro"/>
</dbReference>
<dbReference type="FunFam" id="1.10.10.1800:FF:000001">
    <property type="entry name" value="tRNA uridine 5-carboxymethylaminomethyl modification enzyme MnmG"/>
    <property type="match status" value="1"/>
</dbReference>
<dbReference type="FunFam" id="1.10.150.570:FF:000001">
    <property type="entry name" value="tRNA uridine 5-carboxymethylaminomethyl modification enzyme MnmG"/>
    <property type="match status" value="1"/>
</dbReference>
<dbReference type="FunFam" id="3.50.50.60:FF:000002">
    <property type="entry name" value="tRNA uridine 5-carboxymethylaminomethyl modification enzyme MnmG"/>
    <property type="match status" value="1"/>
</dbReference>
<dbReference type="FunFam" id="3.50.50.60:FF:000010">
    <property type="entry name" value="tRNA uridine 5-carboxymethylaminomethyl modification enzyme MnmG"/>
    <property type="match status" value="1"/>
</dbReference>
<dbReference type="Gene3D" id="3.50.50.60">
    <property type="entry name" value="FAD/NAD(P)-binding domain"/>
    <property type="match status" value="2"/>
</dbReference>
<dbReference type="Gene3D" id="1.10.150.570">
    <property type="entry name" value="GidA associated domain, C-terminal subdomain"/>
    <property type="match status" value="1"/>
</dbReference>
<dbReference type="Gene3D" id="1.10.10.1800">
    <property type="entry name" value="tRNA uridine 5-carboxymethylaminomethyl modification enzyme MnmG/GidA"/>
    <property type="match status" value="1"/>
</dbReference>
<dbReference type="HAMAP" id="MF_00129">
    <property type="entry name" value="MnmG_GidA"/>
    <property type="match status" value="1"/>
</dbReference>
<dbReference type="InterPro" id="IPR036188">
    <property type="entry name" value="FAD/NAD-bd_sf"/>
</dbReference>
<dbReference type="InterPro" id="IPR049312">
    <property type="entry name" value="GIDA_C_N"/>
</dbReference>
<dbReference type="InterPro" id="IPR004416">
    <property type="entry name" value="MnmG"/>
</dbReference>
<dbReference type="InterPro" id="IPR002218">
    <property type="entry name" value="MnmG-rel"/>
</dbReference>
<dbReference type="InterPro" id="IPR020595">
    <property type="entry name" value="MnmG-rel_CS"/>
</dbReference>
<dbReference type="InterPro" id="IPR026904">
    <property type="entry name" value="MnmG_C"/>
</dbReference>
<dbReference type="InterPro" id="IPR047001">
    <property type="entry name" value="MnmG_C_subdom"/>
</dbReference>
<dbReference type="InterPro" id="IPR044920">
    <property type="entry name" value="MnmG_C_subdom_sf"/>
</dbReference>
<dbReference type="InterPro" id="IPR040131">
    <property type="entry name" value="MnmG_N"/>
</dbReference>
<dbReference type="NCBIfam" id="TIGR00136">
    <property type="entry name" value="mnmG_gidA"/>
    <property type="match status" value="1"/>
</dbReference>
<dbReference type="PANTHER" id="PTHR11806">
    <property type="entry name" value="GLUCOSE INHIBITED DIVISION PROTEIN A"/>
    <property type="match status" value="1"/>
</dbReference>
<dbReference type="PANTHER" id="PTHR11806:SF0">
    <property type="entry name" value="PROTEIN MTO1 HOMOLOG, MITOCHONDRIAL"/>
    <property type="match status" value="1"/>
</dbReference>
<dbReference type="Pfam" id="PF01134">
    <property type="entry name" value="GIDA"/>
    <property type="match status" value="1"/>
</dbReference>
<dbReference type="Pfam" id="PF21680">
    <property type="entry name" value="GIDA_C_1st"/>
    <property type="match status" value="1"/>
</dbReference>
<dbReference type="Pfam" id="PF13932">
    <property type="entry name" value="SAM_GIDA_C"/>
    <property type="match status" value="1"/>
</dbReference>
<dbReference type="SMART" id="SM01228">
    <property type="entry name" value="GIDA_assoc_3"/>
    <property type="match status" value="1"/>
</dbReference>
<dbReference type="SUPFAM" id="SSF51905">
    <property type="entry name" value="FAD/NAD(P)-binding domain"/>
    <property type="match status" value="1"/>
</dbReference>
<dbReference type="PROSITE" id="PS01280">
    <property type="entry name" value="GIDA_1"/>
    <property type="match status" value="1"/>
</dbReference>
<dbReference type="PROSITE" id="PS01281">
    <property type="entry name" value="GIDA_2"/>
    <property type="match status" value="1"/>
</dbReference>
<feature type="chain" id="PRO_1000095651" description="tRNA uridine 5-carboxymethylaminomethyl modification enzyme MnmG">
    <location>
        <begin position="1"/>
        <end position="629"/>
    </location>
</feature>
<feature type="binding site" evidence="1">
    <location>
        <begin position="13"/>
        <end position="18"/>
    </location>
    <ligand>
        <name>FAD</name>
        <dbReference type="ChEBI" id="CHEBI:57692"/>
    </ligand>
</feature>
<feature type="binding site" evidence="1">
    <location>
        <position position="125"/>
    </location>
    <ligand>
        <name>FAD</name>
        <dbReference type="ChEBI" id="CHEBI:57692"/>
    </ligand>
</feature>
<feature type="binding site" evidence="1">
    <location>
        <position position="180"/>
    </location>
    <ligand>
        <name>FAD</name>
        <dbReference type="ChEBI" id="CHEBI:57692"/>
    </ligand>
</feature>
<feature type="binding site" evidence="1">
    <location>
        <begin position="273"/>
        <end position="287"/>
    </location>
    <ligand>
        <name>NAD(+)</name>
        <dbReference type="ChEBI" id="CHEBI:57540"/>
    </ligand>
</feature>
<feature type="binding site" evidence="1">
    <location>
        <position position="370"/>
    </location>
    <ligand>
        <name>FAD</name>
        <dbReference type="ChEBI" id="CHEBI:57692"/>
    </ligand>
</feature>
<name>MNMG_ECOSE</name>
<organism>
    <name type="scientific">Escherichia coli (strain SE11)</name>
    <dbReference type="NCBI Taxonomy" id="409438"/>
    <lineage>
        <taxon>Bacteria</taxon>
        <taxon>Pseudomonadati</taxon>
        <taxon>Pseudomonadota</taxon>
        <taxon>Gammaproteobacteria</taxon>
        <taxon>Enterobacterales</taxon>
        <taxon>Enterobacteriaceae</taxon>
        <taxon>Escherichia</taxon>
    </lineage>
</organism>
<comment type="function">
    <text evidence="1">NAD-binding protein involved in the addition of a carboxymethylaminomethyl (cmnm) group at the wobble position (U34) of certain tRNAs, forming tRNA-cmnm(5)s(2)U34.</text>
</comment>
<comment type="cofactor">
    <cofactor evidence="1">
        <name>FAD</name>
        <dbReference type="ChEBI" id="CHEBI:57692"/>
    </cofactor>
</comment>
<comment type="subunit">
    <text evidence="1">Homodimer. Heterotetramer of two MnmE and two MnmG subunits.</text>
</comment>
<comment type="subcellular location">
    <subcellularLocation>
        <location evidence="1">Cytoplasm</location>
    </subcellularLocation>
</comment>
<comment type="similarity">
    <text evidence="1">Belongs to the MnmG family.</text>
</comment>
<reference key="1">
    <citation type="journal article" date="2008" name="DNA Res.">
        <title>Complete genome sequence and comparative analysis of the wild-type commensal Escherichia coli strain SE11 isolated from a healthy adult.</title>
        <authorList>
            <person name="Oshima K."/>
            <person name="Toh H."/>
            <person name="Ogura Y."/>
            <person name="Sasamoto H."/>
            <person name="Morita H."/>
            <person name="Park S.-H."/>
            <person name="Ooka T."/>
            <person name="Iyoda S."/>
            <person name="Taylor T.D."/>
            <person name="Hayashi T."/>
            <person name="Itoh K."/>
            <person name="Hattori M."/>
        </authorList>
    </citation>
    <scope>NUCLEOTIDE SEQUENCE [LARGE SCALE GENOMIC DNA]</scope>
    <source>
        <strain>SE11</strain>
    </source>
</reference>
<evidence type="ECO:0000255" key="1">
    <source>
        <dbReference type="HAMAP-Rule" id="MF_00129"/>
    </source>
</evidence>
<sequence>MFYPDPFDVIIIGGGHAGTEAAMAAARMGQQTLLLTHNIDTLGQMSCNPAIGGIGKGHLVKEVDALGGLMAKAIDQAGIQFRILNASKGPAVRATRAQADRVLYRQAVRTALENQPNLMIFQQAVEDLIVENDRVVGAVTQMGLKFRAKAVVLTVGTFLDGKIHIGLDNYSGGRAGDPPSIPLSRRLRELPLRVGRLKTGTPPRIDARTIDFSVLAQQHGDNPMPVFSFMGNASQHPQQVPCYITHTNEKTHDVIRSNLDRSPMYAGVIEGVGPRYCPSIEDKVMRFADRNQHQIFLEPEGLTSNEIYPNGISTSLPFDVQMQIVRSMQGMENAKIVRPGYAIEYDFFDPRDLKPTLESKFIQGLFFAGQINGTTGYEEAAAQGLLAGLNAARLSADKEGWAPARSQAYLGVLVDDLCTLGTKEPYRMFTSRAEYRLMLREDNADLRLTEIGRELGLVDDERWARFNEKLENIERERQRLKSTWVTPSAEAAAEVNAHLTAPLSREASGEDLLRRPEMTYEKLTTLTPFAPALTDEQAAEQVEIQVKYEGYIARQQDEIEKQLRNENTLLPATLDYRQVSGLSNEVIAKLNDHKPASIGQASRISGVTPAAISILLVWLKKQGMLRRSA</sequence>
<proteinExistence type="inferred from homology"/>
<accession>B6I3X8</accession>
<gene>
    <name evidence="1" type="primary">mnmG</name>
    <name evidence="1" type="synonym">gidA</name>
    <name type="ordered locus">ECSE_4031</name>
</gene>
<keyword id="KW-0963">Cytoplasm</keyword>
<keyword id="KW-0274">FAD</keyword>
<keyword id="KW-0285">Flavoprotein</keyword>
<keyword id="KW-0520">NAD</keyword>
<keyword id="KW-0819">tRNA processing</keyword>